<keyword id="KW-0378">Hydrolase</keyword>
<keyword id="KW-0511">Multifunctional enzyme</keyword>
<keyword id="KW-0658">Purine biosynthesis</keyword>
<keyword id="KW-0808">Transferase</keyword>
<organism>
    <name type="scientific">Prochlorococcus marinus (strain MIT 9312)</name>
    <dbReference type="NCBI Taxonomy" id="74546"/>
    <lineage>
        <taxon>Bacteria</taxon>
        <taxon>Bacillati</taxon>
        <taxon>Cyanobacteriota</taxon>
        <taxon>Cyanophyceae</taxon>
        <taxon>Synechococcales</taxon>
        <taxon>Prochlorococcaceae</taxon>
        <taxon>Prochlorococcus</taxon>
    </lineage>
</organism>
<gene>
    <name evidence="1" type="primary">purH</name>
    <name type="ordered locus">PMT9312_0268</name>
</gene>
<protein>
    <recommendedName>
        <fullName evidence="1">Bifunctional purine biosynthesis protein PurH</fullName>
    </recommendedName>
    <domain>
        <recommendedName>
            <fullName evidence="1">Phosphoribosylaminoimidazolecarboxamide formyltransferase</fullName>
            <ecNumber evidence="1">2.1.2.3</ecNumber>
        </recommendedName>
        <alternativeName>
            <fullName evidence="1">AICAR transformylase</fullName>
        </alternativeName>
    </domain>
    <domain>
        <recommendedName>
            <fullName evidence="1">IMP cyclohydrolase</fullName>
            <ecNumber evidence="1">3.5.4.10</ecNumber>
        </recommendedName>
        <alternativeName>
            <fullName evidence="1">ATIC</fullName>
        </alternativeName>
        <alternativeName>
            <fullName evidence="1">IMP synthase</fullName>
        </alternativeName>
        <alternativeName>
            <fullName evidence="1">Inosinicase</fullName>
        </alternativeName>
    </domain>
</protein>
<reference key="1">
    <citation type="journal article" date="2006" name="Science">
        <title>Genomic islands and the ecology and evolution of Prochlorococcus.</title>
        <authorList>
            <person name="Coleman M.L."/>
            <person name="Sullivan M.B."/>
            <person name="Martiny A.C."/>
            <person name="Steglich C."/>
            <person name="Barry K."/>
            <person name="Delong E.F."/>
            <person name="Chisholm S.W."/>
        </authorList>
    </citation>
    <scope>NUCLEOTIDE SEQUENCE [LARGE SCALE GENOMIC DNA]</scope>
    <source>
        <strain>MIT 9312</strain>
    </source>
</reference>
<sequence length="517" mass="56960">MSPLALVSVSDKKHIVPFCMELVEQFNYRILSSGGTAKHLIEANIPVIKVADFTNSPEILGGRVKTLHPKIHGGILAKRTDEEHKRDIEANDLELIDLVVVNLYPFKKTVEQGSKWEDSIENIDIGGPSMIRSAAKNHKDVSVLVDPSQYQNFLEESKKGELKDSYKAQLALEAFQHTADYDTAISNWISKERGLQSSKYIESYPLINTLRYGENPHQKALWYGLSNIGWNSAEQLQGKDLSYNNLLDLESALSTVLEFGYAEKDELTTDTFASVILKHNNPCGASISNSASQAFLNALECDSVSAFGGIVAFNSNVDSETAINLKDIFLECVVAPSFDAEALEILKIKKNLRILKLSKDQLPKKKQTSTKSIMGGLLVQDTNDSEDKTESWMSVTKNNPSNQMNLDLNFAWKICKHVKSNAIVIAKDQKTIGIGAGQMNRVGAAKIALQAAGKLCSDAVLASDGFFPFADTVELANEYGIKAIIQPGGSLRDQESIDMCNSKGISMVITQKRHFLH</sequence>
<name>PUR9_PROM9</name>
<proteinExistence type="inferred from homology"/>
<dbReference type="EC" id="2.1.2.3" evidence="1"/>
<dbReference type="EC" id="3.5.4.10" evidence="1"/>
<dbReference type="EMBL" id="CP000111">
    <property type="protein sequence ID" value="ABB49329.1"/>
    <property type="molecule type" value="Genomic_DNA"/>
</dbReference>
<dbReference type="RefSeq" id="WP_011375831.1">
    <property type="nucleotide sequence ID" value="NC_007577.1"/>
</dbReference>
<dbReference type="SMR" id="Q31CR6"/>
<dbReference type="STRING" id="74546.PMT9312_0268"/>
<dbReference type="KEGG" id="pmi:PMT9312_0268"/>
<dbReference type="eggNOG" id="COG0138">
    <property type="taxonomic scope" value="Bacteria"/>
</dbReference>
<dbReference type="HOGENOM" id="CLU_016316_5_2_3"/>
<dbReference type="OrthoDB" id="9802065at2"/>
<dbReference type="UniPathway" id="UPA00074">
    <property type="reaction ID" value="UER00133"/>
</dbReference>
<dbReference type="UniPathway" id="UPA00074">
    <property type="reaction ID" value="UER00135"/>
</dbReference>
<dbReference type="Proteomes" id="UP000002715">
    <property type="component" value="Chromosome"/>
</dbReference>
<dbReference type="GO" id="GO:0005829">
    <property type="term" value="C:cytosol"/>
    <property type="evidence" value="ECO:0007669"/>
    <property type="project" value="TreeGrafter"/>
</dbReference>
<dbReference type="GO" id="GO:0003937">
    <property type="term" value="F:IMP cyclohydrolase activity"/>
    <property type="evidence" value="ECO:0007669"/>
    <property type="project" value="UniProtKB-UniRule"/>
</dbReference>
<dbReference type="GO" id="GO:0004643">
    <property type="term" value="F:phosphoribosylaminoimidazolecarboxamide formyltransferase activity"/>
    <property type="evidence" value="ECO:0007669"/>
    <property type="project" value="UniProtKB-UniRule"/>
</dbReference>
<dbReference type="GO" id="GO:0006189">
    <property type="term" value="P:'de novo' IMP biosynthetic process"/>
    <property type="evidence" value="ECO:0007669"/>
    <property type="project" value="UniProtKB-UniRule"/>
</dbReference>
<dbReference type="CDD" id="cd01421">
    <property type="entry name" value="IMPCH"/>
    <property type="match status" value="1"/>
</dbReference>
<dbReference type="FunFam" id="3.40.140.20:FF:000001">
    <property type="entry name" value="Bifunctional purine biosynthesis protein PurH"/>
    <property type="match status" value="1"/>
</dbReference>
<dbReference type="FunFam" id="3.40.50.1380:FF:000001">
    <property type="entry name" value="Bifunctional purine biosynthesis protein PurH"/>
    <property type="match status" value="1"/>
</dbReference>
<dbReference type="Gene3D" id="3.40.140.20">
    <property type="match status" value="2"/>
</dbReference>
<dbReference type="Gene3D" id="3.40.50.1380">
    <property type="entry name" value="Methylglyoxal synthase-like domain"/>
    <property type="match status" value="1"/>
</dbReference>
<dbReference type="HAMAP" id="MF_00139">
    <property type="entry name" value="PurH"/>
    <property type="match status" value="1"/>
</dbReference>
<dbReference type="InterPro" id="IPR024051">
    <property type="entry name" value="AICAR_Tfase_dup_dom_sf"/>
</dbReference>
<dbReference type="InterPro" id="IPR016193">
    <property type="entry name" value="Cytidine_deaminase-like"/>
</dbReference>
<dbReference type="InterPro" id="IPR011607">
    <property type="entry name" value="MGS-like_dom"/>
</dbReference>
<dbReference type="InterPro" id="IPR036914">
    <property type="entry name" value="MGS-like_dom_sf"/>
</dbReference>
<dbReference type="InterPro" id="IPR002695">
    <property type="entry name" value="PurH-like"/>
</dbReference>
<dbReference type="NCBIfam" id="NF002049">
    <property type="entry name" value="PRK00881.1"/>
    <property type="match status" value="1"/>
</dbReference>
<dbReference type="NCBIfam" id="TIGR00355">
    <property type="entry name" value="purH"/>
    <property type="match status" value="1"/>
</dbReference>
<dbReference type="PANTHER" id="PTHR11692:SF0">
    <property type="entry name" value="BIFUNCTIONAL PURINE BIOSYNTHESIS PROTEIN ATIC"/>
    <property type="match status" value="1"/>
</dbReference>
<dbReference type="PANTHER" id="PTHR11692">
    <property type="entry name" value="BIFUNCTIONAL PURINE BIOSYNTHESIS PROTEIN PURH"/>
    <property type="match status" value="1"/>
</dbReference>
<dbReference type="Pfam" id="PF01808">
    <property type="entry name" value="AICARFT_IMPCHas"/>
    <property type="match status" value="1"/>
</dbReference>
<dbReference type="Pfam" id="PF02142">
    <property type="entry name" value="MGS"/>
    <property type="match status" value="1"/>
</dbReference>
<dbReference type="PIRSF" id="PIRSF000414">
    <property type="entry name" value="AICARFT_IMPCHas"/>
    <property type="match status" value="1"/>
</dbReference>
<dbReference type="SMART" id="SM00798">
    <property type="entry name" value="AICARFT_IMPCHas"/>
    <property type="match status" value="1"/>
</dbReference>
<dbReference type="SMART" id="SM00851">
    <property type="entry name" value="MGS"/>
    <property type="match status" value="1"/>
</dbReference>
<dbReference type="SUPFAM" id="SSF53927">
    <property type="entry name" value="Cytidine deaminase-like"/>
    <property type="match status" value="1"/>
</dbReference>
<dbReference type="SUPFAM" id="SSF52335">
    <property type="entry name" value="Methylglyoxal synthase-like"/>
    <property type="match status" value="1"/>
</dbReference>
<dbReference type="PROSITE" id="PS51855">
    <property type="entry name" value="MGS"/>
    <property type="match status" value="1"/>
</dbReference>
<accession>Q31CR6</accession>
<feature type="chain" id="PRO_1000018929" description="Bifunctional purine biosynthesis protein PurH">
    <location>
        <begin position="1"/>
        <end position="517"/>
    </location>
</feature>
<feature type="domain" description="MGS-like" evidence="2">
    <location>
        <begin position="1"/>
        <end position="145"/>
    </location>
</feature>
<evidence type="ECO:0000255" key="1">
    <source>
        <dbReference type="HAMAP-Rule" id="MF_00139"/>
    </source>
</evidence>
<evidence type="ECO:0000255" key="2">
    <source>
        <dbReference type="PROSITE-ProRule" id="PRU01202"/>
    </source>
</evidence>
<comment type="catalytic activity">
    <reaction evidence="1">
        <text>(6R)-10-formyltetrahydrofolate + 5-amino-1-(5-phospho-beta-D-ribosyl)imidazole-4-carboxamide = 5-formamido-1-(5-phospho-D-ribosyl)imidazole-4-carboxamide + (6S)-5,6,7,8-tetrahydrofolate</text>
        <dbReference type="Rhea" id="RHEA:22192"/>
        <dbReference type="ChEBI" id="CHEBI:57453"/>
        <dbReference type="ChEBI" id="CHEBI:58467"/>
        <dbReference type="ChEBI" id="CHEBI:58475"/>
        <dbReference type="ChEBI" id="CHEBI:195366"/>
        <dbReference type="EC" id="2.1.2.3"/>
    </reaction>
</comment>
<comment type="catalytic activity">
    <reaction evidence="1">
        <text>IMP + H2O = 5-formamido-1-(5-phospho-D-ribosyl)imidazole-4-carboxamide</text>
        <dbReference type="Rhea" id="RHEA:18445"/>
        <dbReference type="ChEBI" id="CHEBI:15377"/>
        <dbReference type="ChEBI" id="CHEBI:58053"/>
        <dbReference type="ChEBI" id="CHEBI:58467"/>
        <dbReference type="EC" id="3.5.4.10"/>
    </reaction>
</comment>
<comment type="pathway">
    <text evidence="1">Purine metabolism; IMP biosynthesis via de novo pathway; 5-formamido-1-(5-phospho-D-ribosyl)imidazole-4-carboxamide from 5-amino-1-(5-phospho-D-ribosyl)imidazole-4-carboxamide (10-formyl THF route): step 1/1.</text>
</comment>
<comment type="pathway">
    <text evidence="1">Purine metabolism; IMP biosynthesis via de novo pathway; IMP from 5-formamido-1-(5-phospho-D-ribosyl)imidazole-4-carboxamide: step 1/1.</text>
</comment>
<comment type="domain">
    <text evidence="1">The IMP cyclohydrolase activity resides in the N-terminal region.</text>
</comment>
<comment type="similarity">
    <text evidence="1">Belongs to the PurH family.</text>
</comment>